<feature type="chain" id="PRO_0000293613" description="Aminopyrimidine aminohydrolase">
    <location>
        <begin position="1"/>
        <end position="229"/>
    </location>
</feature>
<feature type="active site" description="Nucleophile" evidence="1">
    <location>
        <position position="137"/>
    </location>
</feature>
<feature type="active site" description="Proton donor" evidence="1">
    <location>
        <position position="208"/>
    </location>
</feature>
<feature type="binding site" evidence="1">
    <location>
        <position position="44"/>
    </location>
    <ligand>
        <name>substrate</name>
    </ligand>
</feature>
<feature type="binding site" evidence="1">
    <location>
        <position position="141"/>
    </location>
    <ligand>
        <name>substrate</name>
    </ligand>
</feature>
<feature type="binding site" evidence="1">
    <location>
        <position position="167"/>
    </location>
    <ligand>
        <name>substrate</name>
    </ligand>
</feature>
<feature type="site" description="Increases nucleophilicity of active site Cys" evidence="1">
    <location>
        <position position="47"/>
    </location>
</feature>
<dbReference type="EC" id="3.5.99.2" evidence="2"/>
<dbReference type="EMBL" id="CP000255">
    <property type="protein sequence ID" value="ABD22120.1"/>
    <property type="molecule type" value="Genomic_DNA"/>
</dbReference>
<dbReference type="RefSeq" id="WP_000396077.1">
    <property type="nucleotide sequence ID" value="NZ_CP027476.1"/>
</dbReference>
<dbReference type="SMR" id="Q2FF32"/>
<dbReference type="KEGG" id="saa:SAUSA300_2050"/>
<dbReference type="HOGENOM" id="CLU_077537_3_1_9"/>
<dbReference type="UniPathway" id="UPA00060"/>
<dbReference type="Proteomes" id="UP000001939">
    <property type="component" value="Chromosome"/>
</dbReference>
<dbReference type="GO" id="GO:0005829">
    <property type="term" value="C:cytosol"/>
    <property type="evidence" value="ECO:0007669"/>
    <property type="project" value="TreeGrafter"/>
</dbReference>
<dbReference type="GO" id="GO:0050334">
    <property type="term" value="F:thiaminase activity"/>
    <property type="evidence" value="ECO:0007669"/>
    <property type="project" value="UniProtKB-EC"/>
</dbReference>
<dbReference type="GO" id="GO:0009228">
    <property type="term" value="P:thiamine biosynthetic process"/>
    <property type="evidence" value="ECO:0007669"/>
    <property type="project" value="UniProtKB-KW"/>
</dbReference>
<dbReference type="GO" id="GO:0009229">
    <property type="term" value="P:thiamine diphosphate biosynthetic process"/>
    <property type="evidence" value="ECO:0007669"/>
    <property type="project" value="UniProtKB-UniPathway"/>
</dbReference>
<dbReference type="CDD" id="cd19360">
    <property type="entry name" value="TenA_C_SaTenA-like"/>
    <property type="match status" value="1"/>
</dbReference>
<dbReference type="FunFam" id="1.20.910.10:FF:000010">
    <property type="entry name" value="Aminopyrimidine aminohydrolase"/>
    <property type="match status" value="1"/>
</dbReference>
<dbReference type="Gene3D" id="1.20.910.10">
    <property type="entry name" value="Heme oxygenase-like"/>
    <property type="match status" value="1"/>
</dbReference>
<dbReference type="InterPro" id="IPR016084">
    <property type="entry name" value="Haem_Oase-like_multi-hlx"/>
</dbReference>
<dbReference type="InterPro" id="IPR004305">
    <property type="entry name" value="Thiaminase-2/PQQC"/>
</dbReference>
<dbReference type="InterPro" id="IPR027574">
    <property type="entry name" value="Thiaminase_II"/>
</dbReference>
<dbReference type="InterPro" id="IPR050967">
    <property type="entry name" value="Thiamine_Salvage_TenA"/>
</dbReference>
<dbReference type="NCBIfam" id="TIGR04306">
    <property type="entry name" value="salvage_TenA"/>
    <property type="match status" value="1"/>
</dbReference>
<dbReference type="PANTHER" id="PTHR43198">
    <property type="entry name" value="BIFUNCTIONAL TH2 PROTEIN"/>
    <property type="match status" value="1"/>
</dbReference>
<dbReference type="PANTHER" id="PTHR43198:SF2">
    <property type="entry name" value="SI:CH1073-67J19.1-RELATED"/>
    <property type="match status" value="1"/>
</dbReference>
<dbReference type="Pfam" id="PF03070">
    <property type="entry name" value="TENA_THI-4"/>
    <property type="match status" value="1"/>
</dbReference>
<dbReference type="SUPFAM" id="SSF48613">
    <property type="entry name" value="Heme oxygenase-like"/>
    <property type="match status" value="1"/>
</dbReference>
<protein>
    <recommendedName>
        <fullName evidence="1">Aminopyrimidine aminohydrolase</fullName>
        <ecNumber evidence="2">3.5.99.2</ecNumber>
    </recommendedName>
    <alternativeName>
        <fullName evidence="2">Thiaminase II</fullName>
    </alternativeName>
</protein>
<name>TENA_STAA3</name>
<accession>Q2FF32</accession>
<keyword id="KW-0378">Hydrolase</keyword>
<keyword id="KW-0784">Thiamine biosynthesis</keyword>
<evidence type="ECO:0000250" key="1">
    <source>
        <dbReference type="UniProtKB" id="P25052"/>
    </source>
</evidence>
<evidence type="ECO:0000250" key="2">
    <source>
        <dbReference type="UniProtKB" id="Q6GEY1"/>
    </source>
</evidence>
<evidence type="ECO:0000305" key="3"/>
<organism>
    <name type="scientific">Staphylococcus aureus (strain USA300)</name>
    <dbReference type="NCBI Taxonomy" id="367830"/>
    <lineage>
        <taxon>Bacteria</taxon>
        <taxon>Bacillati</taxon>
        <taxon>Bacillota</taxon>
        <taxon>Bacilli</taxon>
        <taxon>Bacillales</taxon>
        <taxon>Staphylococcaceae</taxon>
        <taxon>Staphylococcus</taxon>
    </lineage>
</organism>
<proteinExistence type="inferred from homology"/>
<reference key="1">
    <citation type="journal article" date="2006" name="Lancet">
        <title>Complete genome sequence of USA300, an epidemic clone of community-acquired meticillin-resistant Staphylococcus aureus.</title>
        <authorList>
            <person name="Diep B.A."/>
            <person name="Gill S.R."/>
            <person name="Chang R.F."/>
            <person name="Phan T.H."/>
            <person name="Chen J.H."/>
            <person name="Davidson M.G."/>
            <person name="Lin F."/>
            <person name="Lin J."/>
            <person name="Carleton H.A."/>
            <person name="Mongodin E.F."/>
            <person name="Sensabaugh G.F."/>
            <person name="Perdreau-Remington F."/>
        </authorList>
    </citation>
    <scope>NUCLEOTIDE SEQUENCE [LARGE SCALE GENOMIC DNA]</scope>
    <source>
        <strain>USA300</strain>
    </source>
</reference>
<comment type="function">
    <text evidence="1 2">Catalyzes an amino-pyrimidine hydrolysis reaction at the C5' of the pyrimidine moiety of thiamine compounds, a reaction that is part of a thiamine salvage pathway. Thus, catalyzes the conversion of 4-amino-5-aminomethyl-2-methylpyrimidine to 4-amino-5-hydroxymethyl-2-methylpyrimidine (HMP). Is also able to catalyze the hydrolytic cleavage of thiamine; however, this thiaminase activity may not be physiologically relevant. Therefore, is probably involved in the regeneration of the thiamine pyrimidine from thiamine degraded products present in the environment, rather than in thiamine degradation.</text>
</comment>
<comment type="catalytic activity">
    <reaction evidence="1">
        <text>4-amino-5-aminomethyl-2-methylpyrimidine + H2O = 4-amino-5-hydroxymethyl-2-methylpyrimidine + NH4(+)</text>
        <dbReference type="Rhea" id="RHEA:31799"/>
        <dbReference type="ChEBI" id="CHEBI:15377"/>
        <dbReference type="ChEBI" id="CHEBI:16892"/>
        <dbReference type="ChEBI" id="CHEBI:28938"/>
        <dbReference type="ChEBI" id="CHEBI:63416"/>
        <dbReference type="EC" id="3.5.99.2"/>
    </reaction>
</comment>
<comment type="catalytic activity">
    <reaction evidence="2">
        <text>thiamine + H2O = 5-(2-hydroxyethyl)-4-methylthiazole + 4-amino-5-hydroxymethyl-2-methylpyrimidine + H(+)</text>
        <dbReference type="Rhea" id="RHEA:17509"/>
        <dbReference type="ChEBI" id="CHEBI:15377"/>
        <dbReference type="ChEBI" id="CHEBI:15378"/>
        <dbReference type="ChEBI" id="CHEBI:16892"/>
        <dbReference type="ChEBI" id="CHEBI:17957"/>
        <dbReference type="ChEBI" id="CHEBI:18385"/>
        <dbReference type="EC" id="3.5.99.2"/>
    </reaction>
</comment>
<comment type="pathway">
    <text evidence="1">Cofactor biosynthesis; thiamine diphosphate biosynthesis.</text>
</comment>
<comment type="subunit">
    <text evidence="2">Homotetramer.</text>
</comment>
<comment type="similarity">
    <text evidence="3">Belongs to the TenA family.</text>
</comment>
<sequence length="229" mass="26729">MEFSQKLYQAAKPIINDIYEDDFIQKMLSGDIGADALRHYLKADAAYLKEFTNLYALLIPKMNSMNDVKFLVEQIEFMVEGEVLAHDILAQIVGESYEEIIKTKVWPPSGDHYIKHMYFQAHSRENAIYTIAAMAPCPYIYAELAKRSQSDHKLNREKDTAKWFDFYSTEMDDIINVFEALMNKLAESMSDKELEQVKQVFLESCIHERRFFNMAMTLEQWEFGGKVND</sequence>
<gene>
    <name type="primary">tenA</name>
    <name type="ordered locus">SAUSA300_2050</name>
</gene>